<organism>
    <name type="scientific">Escherichia coli (strain UTI89 / UPEC)</name>
    <dbReference type="NCBI Taxonomy" id="364106"/>
    <lineage>
        <taxon>Bacteria</taxon>
        <taxon>Pseudomonadati</taxon>
        <taxon>Pseudomonadota</taxon>
        <taxon>Gammaproteobacteria</taxon>
        <taxon>Enterobacterales</taxon>
        <taxon>Enterobacteriaceae</taxon>
        <taxon>Escherichia</taxon>
    </lineage>
</organism>
<protein>
    <recommendedName>
        <fullName evidence="1">tRNA N6-adenosine threonylcarbamoyltransferase</fullName>
        <ecNumber evidence="1">2.3.1.234</ecNumber>
    </recommendedName>
    <alternativeName>
        <fullName evidence="1">N6-L-threonylcarbamoyladenine synthase</fullName>
        <shortName evidence="1">t(6)A synthase</shortName>
    </alternativeName>
    <alternativeName>
        <fullName evidence="1">t(6)A37 threonylcarbamoyladenosine biosynthesis protein TsaD</fullName>
    </alternativeName>
    <alternativeName>
        <fullName evidence="1">tRNA threonylcarbamoyladenosine biosynthesis protein TsaD</fullName>
    </alternativeName>
</protein>
<accession>Q1R6R7</accession>
<proteinExistence type="inferred from homology"/>
<comment type="function">
    <text evidence="1">Required for the formation of a threonylcarbamoyl group on adenosine at position 37 (t(6)A37) in tRNAs that read codons beginning with adenine. Is involved in the transfer of the threonylcarbamoyl moiety of threonylcarbamoyl-AMP (TC-AMP) to the N6 group of A37, together with TsaE and TsaB. TsaD likely plays a direct catalytic role in this reaction.</text>
</comment>
<comment type="catalytic activity">
    <reaction evidence="1">
        <text>L-threonylcarbamoyladenylate + adenosine(37) in tRNA = N(6)-L-threonylcarbamoyladenosine(37) in tRNA + AMP + H(+)</text>
        <dbReference type="Rhea" id="RHEA:37059"/>
        <dbReference type="Rhea" id="RHEA-COMP:10162"/>
        <dbReference type="Rhea" id="RHEA-COMP:10163"/>
        <dbReference type="ChEBI" id="CHEBI:15378"/>
        <dbReference type="ChEBI" id="CHEBI:73682"/>
        <dbReference type="ChEBI" id="CHEBI:74411"/>
        <dbReference type="ChEBI" id="CHEBI:74418"/>
        <dbReference type="ChEBI" id="CHEBI:456215"/>
        <dbReference type="EC" id="2.3.1.234"/>
    </reaction>
</comment>
<comment type="cofactor">
    <cofactor evidence="1">
        <name>Fe(2+)</name>
        <dbReference type="ChEBI" id="CHEBI:29033"/>
    </cofactor>
    <text evidence="1">Binds 1 Fe(2+) ion per subunit.</text>
</comment>
<comment type="subcellular location">
    <subcellularLocation>
        <location evidence="1">Cytoplasm</location>
    </subcellularLocation>
</comment>
<comment type="similarity">
    <text evidence="1">Belongs to the KAE1 / TsaD family.</text>
</comment>
<feature type="chain" id="PRO_0000303359" description="tRNA N6-adenosine threonylcarbamoyltransferase">
    <location>
        <begin position="1"/>
        <end position="337"/>
    </location>
</feature>
<feature type="binding site" evidence="1">
    <location>
        <position position="111"/>
    </location>
    <ligand>
        <name>Fe cation</name>
        <dbReference type="ChEBI" id="CHEBI:24875"/>
    </ligand>
</feature>
<feature type="binding site" evidence="1">
    <location>
        <position position="115"/>
    </location>
    <ligand>
        <name>Fe cation</name>
        <dbReference type="ChEBI" id="CHEBI:24875"/>
    </ligand>
</feature>
<feature type="binding site" evidence="1">
    <location>
        <begin position="134"/>
        <end position="138"/>
    </location>
    <ligand>
        <name>substrate</name>
    </ligand>
</feature>
<feature type="binding site" evidence="1">
    <location>
        <position position="167"/>
    </location>
    <ligand>
        <name>substrate</name>
    </ligand>
</feature>
<feature type="binding site" evidence="1">
    <location>
        <position position="180"/>
    </location>
    <ligand>
        <name>substrate</name>
    </ligand>
</feature>
<feature type="binding site" evidence="1">
    <location>
        <position position="272"/>
    </location>
    <ligand>
        <name>substrate</name>
    </ligand>
</feature>
<feature type="binding site" evidence="1">
    <location>
        <position position="300"/>
    </location>
    <ligand>
        <name>Fe cation</name>
        <dbReference type="ChEBI" id="CHEBI:24875"/>
    </ligand>
</feature>
<evidence type="ECO:0000255" key="1">
    <source>
        <dbReference type="HAMAP-Rule" id="MF_01445"/>
    </source>
</evidence>
<keyword id="KW-0012">Acyltransferase</keyword>
<keyword id="KW-0963">Cytoplasm</keyword>
<keyword id="KW-0408">Iron</keyword>
<keyword id="KW-0479">Metal-binding</keyword>
<keyword id="KW-0808">Transferase</keyword>
<keyword id="KW-0819">tRNA processing</keyword>
<name>TSAD_ECOUT</name>
<gene>
    <name evidence="1" type="primary">tsaD</name>
    <name type="synonym">gcp</name>
    <name type="ordered locus">UTI89_C3500</name>
</gene>
<sequence>MRVLGIETSCDETGIAIYDDEKGLLANQLYSQVKLHADYGGVVPELASRDHVRKTVPLIQEALKESGLTAKDIDAVAYTAGPGLVGALLVGATVGRSLAFAWDVPAIPVHHMEGHLLAPMLEDNPPEFPFVALLVSGGHTQLISVTGIGQYELLGESIDDAAGEAFDKTAKLLGLDYPGGPLLSKMAAQGTAGRFVFPRPMTDRPGLDFSFSGLKTFAANTIRDNGTDDQTRADIARAFEDAVVDTLMIKCKRALDQTGFKRLVMAGGVSANRTLRAKLAEMMKKRRGEVFYARPEFCTDNGAMIAYAGMVRFKAGATADLGVSVRPRWPLAELPAA</sequence>
<reference key="1">
    <citation type="journal article" date="2006" name="Proc. Natl. Acad. Sci. U.S.A.">
        <title>Identification of genes subject to positive selection in uropathogenic strains of Escherichia coli: a comparative genomics approach.</title>
        <authorList>
            <person name="Chen S.L."/>
            <person name="Hung C.-S."/>
            <person name="Xu J."/>
            <person name="Reigstad C.S."/>
            <person name="Magrini V."/>
            <person name="Sabo A."/>
            <person name="Blasiar D."/>
            <person name="Bieri T."/>
            <person name="Meyer R.R."/>
            <person name="Ozersky P."/>
            <person name="Armstrong J.R."/>
            <person name="Fulton R.S."/>
            <person name="Latreille J.P."/>
            <person name="Spieth J."/>
            <person name="Hooton T.M."/>
            <person name="Mardis E.R."/>
            <person name="Hultgren S.J."/>
            <person name="Gordon J.I."/>
        </authorList>
    </citation>
    <scope>NUCLEOTIDE SEQUENCE [LARGE SCALE GENOMIC DNA]</scope>
    <source>
        <strain>UTI89 / UPEC</strain>
    </source>
</reference>
<dbReference type="EC" id="2.3.1.234" evidence="1"/>
<dbReference type="EMBL" id="CP000243">
    <property type="protein sequence ID" value="ABE08947.1"/>
    <property type="molecule type" value="Genomic_DNA"/>
</dbReference>
<dbReference type="RefSeq" id="WP_001264377.1">
    <property type="nucleotide sequence ID" value="NZ_CP064825.1"/>
</dbReference>
<dbReference type="SMR" id="Q1R6R7"/>
<dbReference type="KEGG" id="eci:UTI89_C3500"/>
<dbReference type="HOGENOM" id="CLU_023208_0_2_6"/>
<dbReference type="Proteomes" id="UP000001952">
    <property type="component" value="Chromosome"/>
</dbReference>
<dbReference type="GO" id="GO:0005737">
    <property type="term" value="C:cytoplasm"/>
    <property type="evidence" value="ECO:0007669"/>
    <property type="project" value="UniProtKB-SubCell"/>
</dbReference>
<dbReference type="GO" id="GO:0005506">
    <property type="term" value="F:iron ion binding"/>
    <property type="evidence" value="ECO:0007669"/>
    <property type="project" value="UniProtKB-UniRule"/>
</dbReference>
<dbReference type="GO" id="GO:0061711">
    <property type="term" value="F:N(6)-L-threonylcarbamoyladenine synthase activity"/>
    <property type="evidence" value="ECO:0007669"/>
    <property type="project" value="UniProtKB-EC"/>
</dbReference>
<dbReference type="GO" id="GO:0002949">
    <property type="term" value="P:tRNA threonylcarbamoyladenosine modification"/>
    <property type="evidence" value="ECO:0007669"/>
    <property type="project" value="UniProtKB-UniRule"/>
</dbReference>
<dbReference type="CDD" id="cd24097">
    <property type="entry name" value="ASKHA_NBD_TsaD-like"/>
    <property type="match status" value="1"/>
</dbReference>
<dbReference type="FunFam" id="3.30.420.40:FF:000031">
    <property type="entry name" value="tRNA N6-adenosine threonylcarbamoyltransferase"/>
    <property type="match status" value="1"/>
</dbReference>
<dbReference type="Gene3D" id="3.30.420.40">
    <property type="match status" value="2"/>
</dbReference>
<dbReference type="HAMAP" id="MF_01445">
    <property type="entry name" value="TsaD"/>
    <property type="match status" value="1"/>
</dbReference>
<dbReference type="InterPro" id="IPR043129">
    <property type="entry name" value="ATPase_NBD"/>
</dbReference>
<dbReference type="InterPro" id="IPR000905">
    <property type="entry name" value="Gcp-like_dom"/>
</dbReference>
<dbReference type="InterPro" id="IPR017861">
    <property type="entry name" value="KAE1/TsaD"/>
</dbReference>
<dbReference type="InterPro" id="IPR017860">
    <property type="entry name" value="Peptidase_M22_CS"/>
</dbReference>
<dbReference type="InterPro" id="IPR022450">
    <property type="entry name" value="TsaD"/>
</dbReference>
<dbReference type="NCBIfam" id="TIGR00329">
    <property type="entry name" value="gcp_kae1"/>
    <property type="match status" value="1"/>
</dbReference>
<dbReference type="NCBIfam" id="TIGR03723">
    <property type="entry name" value="T6A_TsaD_YgjD"/>
    <property type="match status" value="1"/>
</dbReference>
<dbReference type="PANTHER" id="PTHR11735">
    <property type="entry name" value="TRNA N6-ADENOSINE THREONYLCARBAMOYLTRANSFERASE"/>
    <property type="match status" value="1"/>
</dbReference>
<dbReference type="PANTHER" id="PTHR11735:SF6">
    <property type="entry name" value="TRNA N6-ADENOSINE THREONYLCARBAMOYLTRANSFERASE, MITOCHONDRIAL"/>
    <property type="match status" value="1"/>
</dbReference>
<dbReference type="Pfam" id="PF00814">
    <property type="entry name" value="TsaD"/>
    <property type="match status" value="1"/>
</dbReference>
<dbReference type="PRINTS" id="PR00789">
    <property type="entry name" value="OSIALOPTASE"/>
</dbReference>
<dbReference type="SUPFAM" id="SSF53067">
    <property type="entry name" value="Actin-like ATPase domain"/>
    <property type="match status" value="1"/>
</dbReference>
<dbReference type="PROSITE" id="PS01016">
    <property type="entry name" value="GLYCOPROTEASE"/>
    <property type="match status" value="1"/>
</dbReference>